<feature type="chain" id="PRO_0000186617" description="PTS system mannitol-specific EIICBA component">
    <location>
        <begin position="1"/>
        <end position="649"/>
    </location>
</feature>
<feature type="transmembrane region" description="Helical" evidence="1">
    <location>
        <begin position="25"/>
        <end position="46"/>
    </location>
</feature>
<feature type="transmembrane region" description="Helical" evidence="1">
    <location>
        <begin position="51"/>
        <end position="71"/>
    </location>
</feature>
<feature type="transmembrane region" description="Helical" evidence="1">
    <location>
        <begin position="135"/>
        <end position="156"/>
    </location>
</feature>
<feature type="transmembrane region" description="Helical" evidence="1">
    <location>
        <begin position="166"/>
        <end position="186"/>
    </location>
</feature>
<feature type="transmembrane region" description="Helical" evidence="1">
    <location>
        <begin position="274"/>
        <end position="293"/>
    </location>
</feature>
<feature type="transmembrane region" description="Helical" evidence="1">
    <location>
        <begin position="314"/>
        <end position="335"/>
    </location>
</feature>
<feature type="domain" description="PTS EIIC type-2" evidence="4">
    <location>
        <begin position="13"/>
        <end position="342"/>
    </location>
</feature>
<feature type="domain" description="PTS EIIB type-2" evidence="3">
    <location>
        <begin position="384"/>
        <end position="475"/>
    </location>
</feature>
<feature type="domain" description="PTS EIIA type-2" evidence="2">
    <location>
        <begin position="504"/>
        <end position="646"/>
    </location>
</feature>
<feature type="active site" description="Phosphocysteine intermediate; for EIIB activity" evidence="1">
    <location>
        <position position="390"/>
    </location>
</feature>
<feature type="active site" description="Tele-phosphohistidine intermediate; for EIIA activity" evidence="1 2">
    <location>
        <position position="564"/>
    </location>
</feature>
<feature type="site" description="Stabilizes the transition state in the phosphoryl transfer from HPr to EIIA" evidence="1">
    <location>
        <position position="548"/>
    </location>
</feature>
<feature type="modified residue" description="Phosphocysteine; by EIIA" evidence="1 3">
    <location>
        <position position="390"/>
    </location>
</feature>
<feature type="modified residue" description="Phosphohistidine; by HPr" evidence="1">
    <location>
        <position position="564"/>
    </location>
</feature>
<reference key="1">
    <citation type="journal article" date="2000" name="Nature">
        <title>DNA sequence of both chromosomes of the cholera pathogen Vibrio cholerae.</title>
        <authorList>
            <person name="Heidelberg J.F."/>
            <person name="Eisen J.A."/>
            <person name="Nelson W.C."/>
            <person name="Clayton R.A."/>
            <person name="Gwinn M.L."/>
            <person name="Dodson R.J."/>
            <person name="Haft D.H."/>
            <person name="Hickey E.K."/>
            <person name="Peterson J.D."/>
            <person name="Umayam L.A."/>
            <person name="Gill S.R."/>
            <person name="Nelson K.E."/>
            <person name="Read T.D."/>
            <person name="Tettelin H."/>
            <person name="Richardson D.L."/>
            <person name="Ermolaeva M.D."/>
            <person name="Vamathevan J.J."/>
            <person name="Bass S."/>
            <person name="Qin H."/>
            <person name="Dragoi I."/>
            <person name="Sellers P."/>
            <person name="McDonald L.A."/>
            <person name="Utterback T.R."/>
            <person name="Fleischmann R.D."/>
            <person name="Nierman W.C."/>
            <person name="White O."/>
            <person name="Salzberg S.L."/>
            <person name="Smith H.O."/>
            <person name="Colwell R.R."/>
            <person name="Mekalanos J.J."/>
            <person name="Venter J.C."/>
            <person name="Fraser C.M."/>
        </authorList>
    </citation>
    <scope>NUCLEOTIDE SEQUENCE [LARGE SCALE GENOMIC DNA]</scope>
    <source>
        <strain>ATCC 39315 / El Tor Inaba N16961</strain>
    </source>
</reference>
<comment type="function">
    <text evidence="1">The phosphoenolpyruvate-dependent sugar phosphotransferase system (sugar PTS), a major carbohydrate active transport system, catalyzes the phosphorylation of incoming sugar substrates concomitantly with their translocation across the cell membrane. This system is involved in D-mannitol transport.</text>
</comment>
<comment type="catalytic activity">
    <reaction evidence="1">
        <text>D-mannitol(out) + N(pros)-phospho-L-histidyl-[protein] = D-mannitol 1-phosphate(in) + L-histidyl-[protein]</text>
        <dbReference type="Rhea" id="RHEA:33363"/>
        <dbReference type="Rhea" id="RHEA-COMP:9745"/>
        <dbReference type="Rhea" id="RHEA-COMP:9746"/>
        <dbReference type="ChEBI" id="CHEBI:16899"/>
        <dbReference type="ChEBI" id="CHEBI:29979"/>
        <dbReference type="ChEBI" id="CHEBI:61381"/>
        <dbReference type="ChEBI" id="CHEBI:64837"/>
        <dbReference type="EC" id="2.7.1.197"/>
    </reaction>
</comment>
<comment type="subunit">
    <text evidence="1">Homodimer.</text>
</comment>
<comment type="subcellular location">
    <subcellularLocation>
        <location evidence="1 4">Cell inner membrane</location>
        <topology evidence="1 4">Multi-pass membrane protein</topology>
    </subcellularLocation>
</comment>
<comment type="induction">
    <text evidence="1">Induced by mannitol. Repressed by MltR.</text>
</comment>
<comment type="domain">
    <text evidence="4">The EIIC type-2 domain forms the PTS system translocation channel and contains the specific substrate-binding site.</text>
</comment>
<comment type="domain">
    <text evidence="3">The PTS EIIB type-2 domain is phosphorylated by phospho-EIIA on a cysteinyl residue. Then, it transfers the phosphoryl group to the sugar substrate concomitantly with the sugar uptake processed by the PTS EIIC type-2 domain.</text>
</comment>
<comment type="domain">
    <text evidence="2">The PTS EIIA type-2 domain is phosphorylated by phospho-HPr on a histidyl residue. Then, it transfers the phosphoryl group to the PTS EIIB type-2 domain.</text>
</comment>
<comment type="PTM">
    <text evidence="1">An intramolecular phosphotransfer takes places between His-564 and Cys-390.</text>
</comment>
<gene>
    <name type="primary">mtlA</name>
    <name type="ordered locus">VC_A1045</name>
</gene>
<dbReference type="EC" id="2.7.1.197" evidence="1"/>
<dbReference type="EMBL" id="AE003853">
    <property type="protein sequence ID" value="AAF96939.1"/>
    <property type="molecule type" value="Genomic_DNA"/>
</dbReference>
<dbReference type="PIR" id="B82385">
    <property type="entry name" value="B82385"/>
</dbReference>
<dbReference type="RefSeq" id="NP_233427.1">
    <property type="nucleotide sequence ID" value="NC_002506.1"/>
</dbReference>
<dbReference type="RefSeq" id="WP_000625706.1">
    <property type="nucleotide sequence ID" value="NZ_LT906615.1"/>
</dbReference>
<dbReference type="SMR" id="Q9KKQ7"/>
<dbReference type="STRING" id="243277.VC_A1045"/>
<dbReference type="TCDB" id="4.A.2.1.12">
    <property type="family name" value="the pts fructose-mannitol (fru) family"/>
</dbReference>
<dbReference type="DNASU" id="2612120"/>
<dbReference type="EnsemblBacteria" id="AAF96939">
    <property type="protein sequence ID" value="AAF96939"/>
    <property type="gene ID" value="VC_A1045"/>
</dbReference>
<dbReference type="KEGG" id="vch:VC_A1045"/>
<dbReference type="PATRIC" id="fig|243277.26.peg.3651"/>
<dbReference type="eggNOG" id="COG2213">
    <property type="taxonomic scope" value="Bacteria"/>
</dbReference>
<dbReference type="eggNOG" id="COG4668">
    <property type="taxonomic scope" value="Bacteria"/>
</dbReference>
<dbReference type="HOGENOM" id="CLU_028721_1_0_6"/>
<dbReference type="Proteomes" id="UP000000584">
    <property type="component" value="Chromosome 2"/>
</dbReference>
<dbReference type="GO" id="GO:0005886">
    <property type="term" value="C:plasma membrane"/>
    <property type="evidence" value="ECO:0000318"/>
    <property type="project" value="GO_Central"/>
</dbReference>
<dbReference type="GO" id="GO:0016301">
    <property type="term" value="F:kinase activity"/>
    <property type="evidence" value="ECO:0007669"/>
    <property type="project" value="UniProtKB-KW"/>
</dbReference>
<dbReference type="GO" id="GO:0022872">
    <property type="term" value="F:protein-N(PI)-phosphohistidine-mannitol phosphotransferase system transmembrane transporter activity"/>
    <property type="evidence" value="ECO:0007669"/>
    <property type="project" value="InterPro"/>
</dbReference>
<dbReference type="GO" id="GO:0090563">
    <property type="term" value="F:protein-phosphocysteine-sugar phosphotransferase activity"/>
    <property type="evidence" value="ECO:0000318"/>
    <property type="project" value="GO_Central"/>
</dbReference>
<dbReference type="GO" id="GO:0009401">
    <property type="term" value="P:phosphoenolpyruvate-dependent sugar phosphotransferase system"/>
    <property type="evidence" value="ECO:0000318"/>
    <property type="project" value="GO_Central"/>
</dbReference>
<dbReference type="CDD" id="cd00211">
    <property type="entry name" value="PTS_IIA_fru"/>
    <property type="match status" value="1"/>
</dbReference>
<dbReference type="CDD" id="cd05567">
    <property type="entry name" value="PTS_IIB_mannitol"/>
    <property type="match status" value="1"/>
</dbReference>
<dbReference type="FunFam" id="3.40.50.2300:FF:000047">
    <property type="entry name" value="PTS system mannitol-specific transporter subunit IICBA"/>
    <property type="match status" value="1"/>
</dbReference>
<dbReference type="Gene3D" id="3.40.50.2300">
    <property type="match status" value="1"/>
</dbReference>
<dbReference type="Gene3D" id="3.40.930.10">
    <property type="entry name" value="Mannitol-specific EII, Chain A"/>
    <property type="match status" value="1"/>
</dbReference>
<dbReference type="InterPro" id="IPR016152">
    <property type="entry name" value="PTrfase/Anion_transptr"/>
</dbReference>
<dbReference type="InterPro" id="IPR002178">
    <property type="entry name" value="PTS_EIIA_type-2_dom"/>
</dbReference>
<dbReference type="InterPro" id="IPR036095">
    <property type="entry name" value="PTS_EIIB-like_sf"/>
</dbReference>
<dbReference type="InterPro" id="IPR013011">
    <property type="entry name" value="PTS_EIIB_2"/>
</dbReference>
<dbReference type="InterPro" id="IPR003501">
    <property type="entry name" value="PTS_EIIB_2/3"/>
</dbReference>
<dbReference type="InterPro" id="IPR029503">
    <property type="entry name" value="PTS_EIIB_mannitol"/>
</dbReference>
<dbReference type="InterPro" id="IPR003352">
    <property type="entry name" value="PTS_EIIC"/>
</dbReference>
<dbReference type="InterPro" id="IPR013014">
    <property type="entry name" value="PTS_EIIC_2"/>
</dbReference>
<dbReference type="InterPro" id="IPR004718">
    <property type="entry name" value="PTS_IIC_mtl"/>
</dbReference>
<dbReference type="InterPro" id="IPR050893">
    <property type="entry name" value="Sugar_PTS"/>
</dbReference>
<dbReference type="NCBIfam" id="TIGR00851">
    <property type="entry name" value="mtlA"/>
    <property type="match status" value="1"/>
</dbReference>
<dbReference type="NCBIfam" id="NF011663">
    <property type="entry name" value="PRK15083.1"/>
    <property type="match status" value="1"/>
</dbReference>
<dbReference type="PANTHER" id="PTHR30181">
    <property type="entry name" value="MANNITOL PERMEASE IIC COMPONENT"/>
    <property type="match status" value="1"/>
</dbReference>
<dbReference type="PANTHER" id="PTHR30181:SF2">
    <property type="entry name" value="PTS SYSTEM MANNITOL-SPECIFIC EIICBA COMPONENT"/>
    <property type="match status" value="1"/>
</dbReference>
<dbReference type="Pfam" id="PF00359">
    <property type="entry name" value="PTS_EIIA_2"/>
    <property type="match status" value="1"/>
</dbReference>
<dbReference type="Pfam" id="PF02378">
    <property type="entry name" value="PTS_EIIC"/>
    <property type="match status" value="1"/>
</dbReference>
<dbReference type="Pfam" id="PF02302">
    <property type="entry name" value="PTS_IIB"/>
    <property type="match status" value="1"/>
</dbReference>
<dbReference type="SUPFAM" id="SSF55804">
    <property type="entry name" value="Phoshotransferase/anion transport protein"/>
    <property type="match status" value="1"/>
</dbReference>
<dbReference type="SUPFAM" id="SSF52794">
    <property type="entry name" value="PTS system IIB component-like"/>
    <property type="match status" value="1"/>
</dbReference>
<dbReference type="PROSITE" id="PS51094">
    <property type="entry name" value="PTS_EIIA_TYPE_2"/>
    <property type="match status" value="1"/>
</dbReference>
<dbReference type="PROSITE" id="PS00372">
    <property type="entry name" value="PTS_EIIA_TYPE_2_HIS"/>
    <property type="match status" value="1"/>
</dbReference>
<dbReference type="PROSITE" id="PS51099">
    <property type="entry name" value="PTS_EIIB_TYPE_2"/>
    <property type="match status" value="1"/>
</dbReference>
<dbReference type="PROSITE" id="PS51104">
    <property type="entry name" value="PTS_EIIC_TYPE_2"/>
    <property type="match status" value="1"/>
</dbReference>
<evidence type="ECO:0000250" key="1">
    <source>
        <dbReference type="UniProtKB" id="P00550"/>
    </source>
</evidence>
<evidence type="ECO:0000255" key="2">
    <source>
        <dbReference type="PROSITE-ProRule" id="PRU00417"/>
    </source>
</evidence>
<evidence type="ECO:0000255" key="3">
    <source>
        <dbReference type="PROSITE-ProRule" id="PRU00422"/>
    </source>
</evidence>
<evidence type="ECO:0000255" key="4">
    <source>
        <dbReference type="PROSITE-ProRule" id="PRU00427"/>
    </source>
</evidence>
<accession>Q9KKQ7</accession>
<sequence>MISSDAKVKIQNFGRFLSNMVMPNIGAFIAWGFITALFIPTGWVPNETLASLVGPMITYLLPLLIGYTGGKLAGGERGAVVGAITTMGVIVGTDIPMFMGAMIVGPMGGWAIKAFDKKIDGKVRSGFEMLVNNFSAGIIGMLCAIIAFFLIGPFVKVLSGALAAGVNFLVTAHLLPLTSIFVEPAKILFLNNAINHGIFSPLGIQQASETGQSIFFLIEANPGPGLGILLAYMVFGKGTARQTAGGATIIHFFGGIHEIYFPYILMNPRLILAAIAGGMTGVFTLTVFNAGLVSPASPGSIFAVLLMTNKGSILGVVCSIFAAAAVSFTVAALLMKAQTSTEQDGDKDALVKATSIMQEMKAGSKGQAAPTATQSKKIDMANVQSIIVACDAGMGSSAMGASMLRKKIQEVGLPVTVTNMAINSLPAHVDMVITHQDLTDRARQHAPNAEHISLNNFLDSALYNQLVTQLLAAKRQAANDSQLIKPSILAANDDRYEVQQPSVFQLQKENIHLGLNAKNKEEAIRFAGNKLVELGYVHPEYVDAMFEREKLVSTYLGESIAVPHGTVDAKDRVIKTGIVICQYPQGVAFSEDSGDVAKLVIGIAAKNDEHIQVITTITNALDDPNAIDKLTSTKDVSDVLSILATSQAA</sequence>
<proteinExistence type="inferred from homology"/>
<keyword id="KW-0997">Cell inner membrane</keyword>
<keyword id="KW-1003">Cell membrane</keyword>
<keyword id="KW-0418">Kinase</keyword>
<keyword id="KW-0472">Membrane</keyword>
<keyword id="KW-0597">Phosphoprotein</keyword>
<keyword id="KW-0598">Phosphotransferase system</keyword>
<keyword id="KW-1185">Reference proteome</keyword>
<keyword id="KW-0762">Sugar transport</keyword>
<keyword id="KW-0808">Transferase</keyword>
<keyword id="KW-0812">Transmembrane</keyword>
<keyword id="KW-1133">Transmembrane helix</keyword>
<keyword id="KW-0813">Transport</keyword>
<organism>
    <name type="scientific">Vibrio cholerae serotype O1 (strain ATCC 39315 / El Tor Inaba N16961)</name>
    <dbReference type="NCBI Taxonomy" id="243277"/>
    <lineage>
        <taxon>Bacteria</taxon>
        <taxon>Pseudomonadati</taxon>
        <taxon>Pseudomonadota</taxon>
        <taxon>Gammaproteobacteria</taxon>
        <taxon>Vibrionales</taxon>
        <taxon>Vibrionaceae</taxon>
        <taxon>Vibrio</taxon>
    </lineage>
</organism>
<protein>
    <recommendedName>
        <fullName evidence="1">PTS system mannitol-specific EIICBA component</fullName>
    </recommendedName>
    <alternativeName>
        <fullName evidence="1">EIICBA-Mtl</fullName>
        <shortName evidence="1">EII-Mtl</shortName>
    </alternativeName>
    <domain>
        <recommendedName>
            <fullName evidence="1">Mannitol permease IIC component</fullName>
        </recommendedName>
        <alternativeName>
            <fullName evidence="1">PTS system mannitol-specific EIIC component</fullName>
        </alternativeName>
    </domain>
    <domain>
        <recommendedName>
            <fullName evidence="1">Mannitol-specific phosphotransferase enzyme IIB component</fullName>
            <ecNumber evidence="1">2.7.1.197</ecNumber>
        </recommendedName>
        <alternativeName>
            <fullName evidence="1">PTS system mannitol-specific EIIB component</fullName>
        </alternativeName>
    </domain>
    <domain>
        <recommendedName>
            <fullName evidence="1">Mannitol-specific phosphotransferase enzyme IIA component</fullName>
        </recommendedName>
        <alternativeName>
            <fullName evidence="1">PTS system mannitol-specific EIIA component</fullName>
        </alternativeName>
    </domain>
</protein>
<name>PTM3C_VIBCH</name>